<comment type="function">
    <text evidence="1">Is the main repressor of the genes involved in the de novo synthesis of purine nucleotides, regulating purB, purC, purEK, purF, purHD, purL, purMN and guaBA expression. PurR is allosterically activated to bind its cognate DNA by binding the purine corepressors, hypoxanthine or guanine, thereby effecting transcription repression.</text>
</comment>
<comment type="pathway">
    <text>Purine metabolism; purine nucleotide biosynthesis [regulation].</text>
</comment>
<comment type="subunit">
    <text evidence="1">Homodimer.</text>
</comment>
<comment type="domain">
    <text evidence="1">Consists of two structural and functional domains: an N-terminal DNA-binding domain, approximately the first 60 residues, and a larger C-terminal domain, approximately 280 residues, which imparts the function of corepressor binding and oligomerization.</text>
</comment>
<organism>
    <name type="scientific">Vibrio parahaemolyticus serotype O3:K6 (strain RIMD 2210633)</name>
    <dbReference type="NCBI Taxonomy" id="223926"/>
    <lineage>
        <taxon>Bacteria</taxon>
        <taxon>Pseudomonadati</taxon>
        <taxon>Pseudomonadota</taxon>
        <taxon>Gammaproteobacteria</taxon>
        <taxon>Vibrionales</taxon>
        <taxon>Vibrionaceae</taxon>
        <taxon>Vibrio</taxon>
    </lineage>
</organism>
<sequence>MATIKDVARLAGVSTTTVSHVINKTRFVAEATQEKVMKAVDELNYAPSAVARSLKCNSTRTIGMLVTQSTNLFFSEVIDGVESYCYRQGYTLILCNTGGIYEKQRDYIRMLAEKRVDGILVMCSDLTEELKEMLDRHSDIPKVVMDWGPESSRADKIIDNSEEGGYLATKYLIDNGHTDIACLSGHFEKLACQERIAGFRRAMAEAKLPINEDWILEGNFECDTAVLVADKITAMEKRPTAVFCFNDTMALGLMSRLQQNGIKVPDDVSVIGYDNIELAEYFSPPLTTIHQPKRRVGKNAFEILLERIKDKEHEKRVFEMQPEIVIRNTVKKLN</sequence>
<dbReference type="EMBL" id="BA000031">
    <property type="protein sequence ID" value="BAC59293.1"/>
    <property type="molecule type" value="Genomic_DNA"/>
</dbReference>
<dbReference type="RefSeq" id="NP_797409.1">
    <property type="nucleotide sequence ID" value="NC_004603.1"/>
</dbReference>
<dbReference type="RefSeq" id="WP_005457245.1">
    <property type="nucleotide sequence ID" value="NC_004603.1"/>
</dbReference>
<dbReference type="SMR" id="Q87QW9"/>
<dbReference type="GeneID" id="1188534"/>
<dbReference type="KEGG" id="vpa:VP1030"/>
<dbReference type="PATRIC" id="fig|223926.6.peg.976"/>
<dbReference type="eggNOG" id="COG1609">
    <property type="taxonomic scope" value="Bacteria"/>
</dbReference>
<dbReference type="HOGENOM" id="CLU_037628_6_2_6"/>
<dbReference type="UniPathway" id="UPA00488"/>
<dbReference type="Proteomes" id="UP000002493">
    <property type="component" value="Chromosome 1"/>
</dbReference>
<dbReference type="GO" id="GO:0003700">
    <property type="term" value="F:DNA-binding transcription factor activity"/>
    <property type="evidence" value="ECO:0007669"/>
    <property type="project" value="TreeGrafter"/>
</dbReference>
<dbReference type="GO" id="GO:0000976">
    <property type="term" value="F:transcription cis-regulatory region binding"/>
    <property type="evidence" value="ECO:0007669"/>
    <property type="project" value="TreeGrafter"/>
</dbReference>
<dbReference type="GO" id="GO:0045892">
    <property type="term" value="P:negative regulation of DNA-templated transcription"/>
    <property type="evidence" value="ECO:0007669"/>
    <property type="project" value="UniProtKB-UniRule"/>
</dbReference>
<dbReference type="GO" id="GO:0006164">
    <property type="term" value="P:purine nucleotide biosynthetic process"/>
    <property type="evidence" value="ECO:0007669"/>
    <property type="project" value="UniProtKB-UniPathway"/>
</dbReference>
<dbReference type="CDD" id="cd01392">
    <property type="entry name" value="HTH_LacI"/>
    <property type="match status" value="1"/>
</dbReference>
<dbReference type="CDD" id="cd06275">
    <property type="entry name" value="PBP1_PurR"/>
    <property type="match status" value="1"/>
</dbReference>
<dbReference type="FunFam" id="1.10.260.40:FF:000002">
    <property type="entry name" value="HTH-type transcriptional repressor PurR"/>
    <property type="match status" value="1"/>
</dbReference>
<dbReference type="Gene3D" id="3.40.50.2300">
    <property type="match status" value="2"/>
</dbReference>
<dbReference type="Gene3D" id="1.10.260.40">
    <property type="entry name" value="lambda repressor-like DNA-binding domains"/>
    <property type="match status" value="1"/>
</dbReference>
<dbReference type="HAMAP" id="MF_01277">
    <property type="entry name" value="HTH_type_PurR"/>
    <property type="match status" value="1"/>
</dbReference>
<dbReference type="InterPro" id="IPR000843">
    <property type="entry name" value="HTH_LacI"/>
</dbReference>
<dbReference type="InterPro" id="IPR046335">
    <property type="entry name" value="LacI/GalR-like_sensor"/>
</dbReference>
<dbReference type="InterPro" id="IPR010982">
    <property type="entry name" value="Lambda_DNA-bd_dom_sf"/>
</dbReference>
<dbReference type="InterPro" id="IPR028082">
    <property type="entry name" value="Peripla_BP_I"/>
</dbReference>
<dbReference type="InterPro" id="IPR023588">
    <property type="entry name" value="Tscrpt_reg_HTH_PurR"/>
</dbReference>
<dbReference type="PANTHER" id="PTHR30146:SF148">
    <property type="entry name" value="HTH-TYPE TRANSCRIPTIONAL REPRESSOR PURR-RELATED"/>
    <property type="match status" value="1"/>
</dbReference>
<dbReference type="PANTHER" id="PTHR30146">
    <property type="entry name" value="LACI-RELATED TRANSCRIPTIONAL REPRESSOR"/>
    <property type="match status" value="1"/>
</dbReference>
<dbReference type="Pfam" id="PF00356">
    <property type="entry name" value="LacI"/>
    <property type="match status" value="1"/>
</dbReference>
<dbReference type="Pfam" id="PF13377">
    <property type="entry name" value="Peripla_BP_3"/>
    <property type="match status" value="1"/>
</dbReference>
<dbReference type="PRINTS" id="PR00036">
    <property type="entry name" value="HTHLACI"/>
</dbReference>
<dbReference type="SMART" id="SM00354">
    <property type="entry name" value="HTH_LACI"/>
    <property type="match status" value="1"/>
</dbReference>
<dbReference type="SUPFAM" id="SSF47413">
    <property type="entry name" value="lambda repressor-like DNA-binding domains"/>
    <property type="match status" value="1"/>
</dbReference>
<dbReference type="SUPFAM" id="SSF53822">
    <property type="entry name" value="Periplasmic binding protein-like I"/>
    <property type="match status" value="1"/>
</dbReference>
<dbReference type="PROSITE" id="PS00356">
    <property type="entry name" value="HTH_LACI_1"/>
    <property type="match status" value="1"/>
</dbReference>
<dbReference type="PROSITE" id="PS50932">
    <property type="entry name" value="HTH_LACI_2"/>
    <property type="match status" value="1"/>
</dbReference>
<accession>Q87QW9</accession>
<reference key="1">
    <citation type="journal article" date="2003" name="Lancet">
        <title>Genome sequence of Vibrio parahaemolyticus: a pathogenic mechanism distinct from that of V. cholerae.</title>
        <authorList>
            <person name="Makino K."/>
            <person name="Oshima K."/>
            <person name="Kurokawa K."/>
            <person name="Yokoyama K."/>
            <person name="Uda T."/>
            <person name="Tagomori K."/>
            <person name="Iijima Y."/>
            <person name="Najima M."/>
            <person name="Nakano M."/>
            <person name="Yamashita A."/>
            <person name="Kubota Y."/>
            <person name="Kimura S."/>
            <person name="Yasunaga T."/>
            <person name="Honda T."/>
            <person name="Shinagawa H."/>
            <person name="Hattori M."/>
            <person name="Iida T."/>
        </authorList>
    </citation>
    <scope>NUCLEOTIDE SEQUENCE [LARGE SCALE GENOMIC DNA]</scope>
    <source>
        <strain>RIMD 2210633</strain>
    </source>
</reference>
<proteinExistence type="inferred from homology"/>
<keyword id="KW-0238">DNA-binding</keyword>
<keyword id="KW-0658">Purine biosynthesis</keyword>
<keyword id="KW-0678">Repressor</keyword>
<keyword id="KW-0804">Transcription</keyword>
<keyword id="KW-0805">Transcription regulation</keyword>
<evidence type="ECO:0000255" key="1">
    <source>
        <dbReference type="HAMAP-Rule" id="MF_01277"/>
    </source>
</evidence>
<gene>
    <name evidence="1" type="primary">purR</name>
    <name type="ordered locus">VP1030</name>
</gene>
<feature type="chain" id="PRO_0000279674" description="HTH-type transcriptional repressor PurR">
    <location>
        <begin position="1"/>
        <end position="334"/>
    </location>
</feature>
<feature type="domain" description="HTH lacI-type" evidence="1">
    <location>
        <begin position="2"/>
        <end position="56"/>
    </location>
</feature>
<feature type="DNA-binding region" description="H-T-H motif" evidence="1">
    <location>
        <begin position="4"/>
        <end position="23"/>
    </location>
</feature>
<feature type="DNA-binding region" evidence="1">
    <location>
        <begin position="48"/>
        <end position="56"/>
    </location>
</feature>
<feature type="binding site" evidence="1">
    <location>
        <position position="73"/>
    </location>
    <ligand>
        <name>hypoxanthine</name>
        <dbReference type="ChEBI" id="CHEBI:17368"/>
    </ligand>
</feature>
<feature type="binding site" evidence="1">
    <location>
        <position position="189"/>
    </location>
    <ligand>
        <name>hypoxanthine</name>
        <dbReference type="ChEBI" id="CHEBI:17368"/>
    </ligand>
</feature>
<feature type="binding site" evidence="1">
    <location>
        <position position="220"/>
    </location>
    <ligand>
        <name>hypoxanthine</name>
        <dbReference type="ChEBI" id="CHEBI:17368"/>
    </ligand>
</feature>
<feature type="binding site" evidence="1">
    <location>
        <position position="274"/>
    </location>
    <ligand>
        <name>hypoxanthine</name>
        <dbReference type="ChEBI" id="CHEBI:17368"/>
    </ligand>
</feature>
<protein>
    <recommendedName>
        <fullName evidence="1">HTH-type transcriptional repressor PurR</fullName>
    </recommendedName>
    <alternativeName>
        <fullName evidence="1">Pur regulon repressor</fullName>
    </alternativeName>
    <alternativeName>
        <fullName evidence="1">Purine nucleotide synthesis repressor</fullName>
    </alternativeName>
</protein>
<name>PURR_VIBPA</name>